<gene>
    <name evidence="1" type="primary">purA</name>
    <name type="ordered locus">PFL_0571</name>
</gene>
<keyword id="KW-0963">Cytoplasm</keyword>
<keyword id="KW-0342">GTP-binding</keyword>
<keyword id="KW-0436">Ligase</keyword>
<keyword id="KW-0460">Magnesium</keyword>
<keyword id="KW-0479">Metal-binding</keyword>
<keyword id="KW-0547">Nucleotide-binding</keyword>
<keyword id="KW-0658">Purine biosynthesis</keyword>
<feature type="chain" id="PRO_0000224307" description="Adenylosuccinate synthetase">
    <location>
        <begin position="1"/>
        <end position="430"/>
    </location>
</feature>
<feature type="active site" description="Proton acceptor" evidence="1">
    <location>
        <position position="14"/>
    </location>
</feature>
<feature type="active site" description="Proton donor" evidence="1">
    <location>
        <position position="42"/>
    </location>
</feature>
<feature type="binding site" evidence="1">
    <location>
        <begin position="13"/>
        <end position="19"/>
    </location>
    <ligand>
        <name>GTP</name>
        <dbReference type="ChEBI" id="CHEBI:37565"/>
    </ligand>
</feature>
<feature type="binding site" description="in other chain" evidence="1">
    <location>
        <begin position="14"/>
        <end position="17"/>
    </location>
    <ligand>
        <name>IMP</name>
        <dbReference type="ChEBI" id="CHEBI:58053"/>
        <note>ligand shared between dimeric partners</note>
    </ligand>
</feature>
<feature type="binding site" evidence="1">
    <location>
        <position position="14"/>
    </location>
    <ligand>
        <name>Mg(2+)</name>
        <dbReference type="ChEBI" id="CHEBI:18420"/>
    </ligand>
</feature>
<feature type="binding site" description="in other chain" evidence="1">
    <location>
        <begin position="39"/>
        <end position="42"/>
    </location>
    <ligand>
        <name>IMP</name>
        <dbReference type="ChEBI" id="CHEBI:58053"/>
        <note>ligand shared between dimeric partners</note>
    </ligand>
</feature>
<feature type="binding site" evidence="1">
    <location>
        <begin position="41"/>
        <end position="43"/>
    </location>
    <ligand>
        <name>GTP</name>
        <dbReference type="ChEBI" id="CHEBI:37565"/>
    </ligand>
</feature>
<feature type="binding site" evidence="1">
    <location>
        <position position="41"/>
    </location>
    <ligand>
        <name>Mg(2+)</name>
        <dbReference type="ChEBI" id="CHEBI:18420"/>
    </ligand>
</feature>
<feature type="binding site" description="in other chain" evidence="1">
    <location>
        <position position="130"/>
    </location>
    <ligand>
        <name>IMP</name>
        <dbReference type="ChEBI" id="CHEBI:58053"/>
        <note>ligand shared between dimeric partners</note>
    </ligand>
</feature>
<feature type="binding site" evidence="1">
    <location>
        <position position="144"/>
    </location>
    <ligand>
        <name>IMP</name>
        <dbReference type="ChEBI" id="CHEBI:58053"/>
        <note>ligand shared between dimeric partners</note>
    </ligand>
</feature>
<feature type="binding site" description="in other chain" evidence="1">
    <location>
        <position position="225"/>
    </location>
    <ligand>
        <name>IMP</name>
        <dbReference type="ChEBI" id="CHEBI:58053"/>
        <note>ligand shared between dimeric partners</note>
    </ligand>
</feature>
<feature type="binding site" description="in other chain" evidence="1">
    <location>
        <position position="240"/>
    </location>
    <ligand>
        <name>IMP</name>
        <dbReference type="ChEBI" id="CHEBI:58053"/>
        <note>ligand shared between dimeric partners</note>
    </ligand>
</feature>
<feature type="binding site" evidence="1">
    <location>
        <begin position="300"/>
        <end position="306"/>
    </location>
    <ligand>
        <name>substrate</name>
    </ligand>
</feature>
<feature type="binding site" description="in other chain" evidence="1">
    <location>
        <position position="304"/>
    </location>
    <ligand>
        <name>IMP</name>
        <dbReference type="ChEBI" id="CHEBI:58053"/>
        <note>ligand shared between dimeric partners</note>
    </ligand>
</feature>
<feature type="binding site" evidence="1">
    <location>
        <position position="306"/>
    </location>
    <ligand>
        <name>GTP</name>
        <dbReference type="ChEBI" id="CHEBI:37565"/>
    </ligand>
</feature>
<feature type="binding site" evidence="1">
    <location>
        <begin position="332"/>
        <end position="334"/>
    </location>
    <ligand>
        <name>GTP</name>
        <dbReference type="ChEBI" id="CHEBI:37565"/>
    </ligand>
</feature>
<feature type="binding site" evidence="1">
    <location>
        <begin position="414"/>
        <end position="416"/>
    </location>
    <ligand>
        <name>GTP</name>
        <dbReference type="ChEBI" id="CHEBI:37565"/>
    </ligand>
</feature>
<name>PURA_PSEF5</name>
<dbReference type="EC" id="6.3.4.4" evidence="1"/>
<dbReference type="EMBL" id="CP000076">
    <property type="protein sequence ID" value="AAY95980.1"/>
    <property type="molecule type" value="Genomic_DNA"/>
</dbReference>
<dbReference type="RefSeq" id="WP_011058943.1">
    <property type="nucleotide sequence ID" value="NC_004129.6"/>
</dbReference>
<dbReference type="SMR" id="Q4KJ68"/>
<dbReference type="STRING" id="220664.PFL_0571"/>
<dbReference type="KEGG" id="pfl:PFL_0571"/>
<dbReference type="PATRIC" id="fig|220664.5.peg.589"/>
<dbReference type="eggNOG" id="COG0104">
    <property type="taxonomic scope" value="Bacteria"/>
</dbReference>
<dbReference type="HOGENOM" id="CLU_029848_0_0_6"/>
<dbReference type="UniPathway" id="UPA00075">
    <property type="reaction ID" value="UER00335"/>
</dbReference>
<dbReference type="Proteomes" id="UP000008540">
    <property type="component" value="Chromosome"/>
</dbReference>
<dbReference type="GO" id="GO:0005737">
    <property type="term" value="C:cytoplasm"/>
    <property type="evidence" value="ECO:0007669"/>
    <property type="project" value="UniProtKB-SubCell"/>
</dbReference>
<dbReference type="GO" id="GO:0004019">
    <property type="term" value="F:adenylosuccinate synthase activity"/>
    <property type="evidence" value="ECO:0007669"/>
    <property type="project" value="UniProtKB-UniRule"/>
</dbReference>
<dbReference type="GO" id="GO:0005525">
    <property type="term" value="F:GTP binding"/>
    <property type="evidence" value="ECO:0007669"/>
    <property type="project" value="UniProtKB-UniRule"/>
</dbReference>
<dbReference type="GO" id="GO:0000287">
    <property type="term" value="F:magnesium ion binding"/>
    <property type="evidence" value="ECO:0007669"/>
    <property type="project" value="UniProtKB-UniRule"/>
</dbReference>
<dbReference type="GO" id="GO:0044208">
    <property type="term" value="P:'de novo' AMP biosynthetic process"/>
    <property type="evidence" value="ECO:0007669"/>
    <property type="project" value="UniProtKB-UniRule"/>
</dbReference>
<dbReference type="GO" id="GO:0046040">
    <property type="term" value="P:IMP metabolic process"/>
    <property type="evidence" value="ECO:0007669"/>
    <property type="project" value="TreeGrafter"/>
</dbReference>
<dbReference type="CDD" id="cd03108">
    <property type="entry name" value="AdSS"/>
    <property type="match status" value="1"/>
</dbReference>
<dbReference type="FunFam" id="1.10.300.10:FF:000001">
    <property type="entry name" value="Adenylosuccinate synthetase"/>
    <property type="match status" value="1"/>
</dbReference>
<dbReference type="FunFam" id="3.90.170.10:FF:000001">
    <property type="entry name" value="Adenylosuccinate synthetase"/>
    <property type="match status" value="1"/>
</dbReference>
<dbReference type="Gene3D" id="3.40.440.10">
    <property type="entry name" value="Adenylosuccinate Synthetase, subunit A, domain 1"/>
    <property type="match status" value="1"/>
</dbReference>
<dbReference type="Gene3D" id="1.10.300.10">
    <property type="entry name" value="Adenylosuccinate Synthetase, subunit A, domain 2"/>
    <property type="match status" value="1"/>
</dbReference>
<dbReference type="Gene3D" id="3.90.170.10">
    <property type="entry name" value="Adenylosuccinate Synthetase, subunit A, domain 3"/>
    <property type="match status" value="1"/>
</dbReference>
<dbReference type="HAMAP" id="MF_00011">
    <property type="entry name" value="Adenylosucc_synth"/>
    <property type="match status" value="1"/>
</dbReference>
<dbReference type="InterPro" id="IPR018220">
    <property type="entry name" value="Adenylosuccin_syn_GTP-bd"/>
</dbReference>
<dbReference type="InterPro" id="IPR033128">
    <property type="entry name" value="Adenylosuccin_syn_Lys_AS"/>
</dbReference>
<dbReference type="InterPro" id="IPR042109">
    <property type="entry name" value="Adenylosuccinate_synth_dom1"/>
</dbReference>
<dbReference type="InterPro" id="IPR042110">
    <property type="entry name" value="Adenylosuccinate_synth_dom2"/>
</dbReference>
<dbReference type="InterPro" id="IPR042111">
    <property type="entry name" value="Adenylosuccinate_synth_dom3"/>
</dbReference>
<dbReference type="InterPro" id="IPR001114">
    <property type="entry name" value="Adenylosuccinate_synthetase"/>
</dbReference>
<dbReference type="InterPro" id="IPR027417">
    <property type="entry name" value="P-loop_NTPase"/>
</dbReference>
<dbReference type="NCBIfam" id="NF002223">
    <property type="entry name" value="PRK01117.1"/>
    <property type="match status" value="1"/>
</dbReference>
<dbReference type="NCBIfam" id="TIGR00184">
    <property type="entry name" value="purA"/>
    <property type="match status" value="1"/>
</dbReference>
<dbReference type="PANTHER" id="PTHR11846">
    <property type="entry name" value="ADENYLOSUCCINATE SYNTHETASE"/>
    <property type="match status" value="1"/>
</dbReference>
<dbReference type="PANTHER" id="PTHR11846:SF0">
    <property type="entry name" value="ADENYLOSUCCINATE SYNTHETASE"/>
    <property type="match status" value="1"/>
</dbReference>
<dbReference type="Pfam" id="PF00709">
    <property type="entry name" value="Adenylsucc_synt"/>
    <property type="match status" value="1"/>
</dbReference>
<dbReference type="SMART" id="SM00788">
    <property type="entry name" value="Adenylsucc_synt"/>
    <property type="match status" value="1"/>
</dbReference>
<dbReference type="SUPFAM" id="SSF52540">
    <property type="entry name" value="P-loop containing nucleoside triphosphate hydrolases"/>
    <property type="match status" value="1"/>
</dbReference>
<dbReference type="PROSITE" id="PS01266">
    <property type="entry name" value="ADENYLOSUCCIN_SYN_1"/>
    <property type="match status" value="1"/>
</dbReference>
<dbReference type="PROSITE" id="PS00513">
    <property type="entry name" value="ADENYLOSUCCIN_SYN_2"/>
    <property type="match status" value="1"/>
</dbReference>
<protein>
    <recommendedName>
        <fullName evidence="1">Adenylosuccinate synthetase</fullName>
        <shortName evidence="1">AMPSase</shortName>
        <shortName evidence="1">AdSS</shortName>
        <ecNumber evidence="1">6.3.4.4</ecNumber>
    </recommendedName>
    <alternativeName>
        <fullName evidence="1">IMP--aspartate ligase</fullName>
    </alternativeName>
</protein>
<sequence>MGKNVVVLGTQWGDEGKGKIVDLLTEHAAAVVRYQGGHNAGHTLVIDGEKTVLHLIPSGVLREGVQCLIGNGVVVAPDALMREIVKLEEKGVPVRERLRISPSCPLILSYHVALDQAREKARGEQKIGTTGRGIGPAYEDKVARRGLRIGDLFHRERFAAKLGELLDYHNFVLVNYYKEPAIDFQKTLDECMEYAELLKPMMLDVTAELHQLRRAGKDIMFEGAQGSLLDIDHGTYPYVTSSNTTAGGIATGSGVGPMYLDYILGITKAYTTRVGSGPFPTELFDDIGAFLAKRGHEFGATTGRARRCGWFDAVILRRAIDVNSISGLCLTKLDVLDGLETINICVGYKNQDGAVIDAPTDADSYIGLEPVYEQMPGWSESTLGAKTLEELPAAAQAYIKRIEELVGAPIDIISTGPDRNETIVLRHPFA</sequence>
<evidence type="ECO:0000255" key="1">
    <source>
        <dbReference type="HAMAP-Rule" id="MF_00011"/>
    </source>
</evidence>
<comment type="function">
    <text evidence="1">Plays an important role in the de novo pathway of purine nucleotide biosynthesis. Catalyzes the first committed step in the biosynthesis of AMP from IMP.</text>
</comment>
<comment type="catalytic activity">
    <reaction evidence="1">
        <text>IMP + L-aspartate + GTP = N(6)-(1,2-dicarboxyethyl)-AMP + GDP + phosphate + 2 H(+)</text>
        <dbReference type="Rhea" id="RHEA:15753"/>
        <dbReference type="ChEBI" id="CHEBI:15378"/>
        <dbReference type="ChEBI" id="CHEBI:29991"/>
        <dbReference type="ChEBI" id="CHEBI:37565"/>
        <dbReference type="ChEBI" id="CHEBI:43474"/>
        <dbReference type="ChEBI" id="CHEBI:57567"/>
        <dbReference type="ChEBI" id="CHEBI:58053"/>
        <dbReference type="ChEBI" id="CHEBI:58189"/>
        <dbReference type="EC" id="6.3.4.4"/>
    </reaction>
</comment>
<comment type="cofactor">
    <cofactor evidence="1">
        <name>Mg(2+)</name>
        <dbReference type="ChEBI" id="CHEBI:18420"/>
    </cofactor>
    <text evidence="1">Binds 1 Mg(2+) ion per subunit.</text>
</comment>
<comment type="pathway">
    <text evidence="1">Purine metabolism; AMP biosynthesis via de novo pathway; AMP from IMP: step 1/2.</text>
</comment>
<comment type="subunit">
    <text evidence="1">Homodimer.</text>
</comment>
<comment type="subcellular location">
    <subcellularLocation>
        <location evidence="1">Cytoplasm</location>
    </subcellularLocation>
</comment>
<comment type="similarity">
    <text evidence="1">Belongs to the adenylosuccinate synthetase family.</text>
</comment>
<organism>
    <name type="scientific">Pseudomonas fluorescens (strain ATCC BAA-477 / NRRL B-23932 / Pf-5)</name>
    <dbReference type="NCBI Taxonomy" id="220664"/>
    <lineage>
        <taxon>Bacteria</taxon>
        <taxon>Pseudomonadati</taxon>
        <taxon>Pseudomonadota</taxon>
        <taxon>Gammaproteobacteria</taxon>
        <taxon>Pseudomonadales</taxon>
        <taxon>Pseudomonadaceae</taxon>
        <taxon>Pseudomonas</taxon>
    </lineage>
</organism>
<accession>Q4KJ68</accession>
<reference key="1">
    <citation type="journal article" date="2005" name="Nat. Biotechnol.">
        <title>Complete genome sequence of the plant commensal Pseudomonas fluorescens Pf-5.</title>
        <authorList>
            <person name="Paulsen I.T."/>
            <person name="Press C.M."/>
            <person name="Ravel J."/>
            <person name="Kobayashi D.Y."/>
            <person name="Myers G.S.A."/>
            <person name="Mavrodi D.V."/>
            <person name="DeBoy R.T."/>
            <person name="Seshadri R."/>
            <person name="Ren Q."/>
            <person name="Madupu R."/>
            <person name="Dodson R.J."/>
            <person name="Durkin A.S."/>
            <person name="Brinkac L.M."/>
            <person name="Daugherty S.C."/>
            <person name="Sullivan S.A."/>
            <person name="Rosovitz M.J."/>
            <person name="Gwinn M.L."/>
            <person name="Zhou L."/>
            <person name="Schneider D.J."/>
            <person name="Cartinhour S.W."/>
            <person name="Nelson W.C."/>
            <person name="Weidman J."/>
            <person name="Watkins K."/>
            <person name="Tran K."/>
            <person name="Khouri H."/>
            <person name="Pierson E.A."/>
            <person name="Pierson L.S. III"/>
            <person name="Thomashow L.S."/>
            <person name="Loper J.E."/>
        </authorList>
    </citation>
    <scope>NUCLEOTIDE SEQUENCE [LARGE SCALE GENOMIC DNA]</scope>
    <source>
        <strain>ATCC BAA-477 / NRRL B-23932 / Pf-5</strain>
    </source>
</reference>
<proteinExistence type="inferred from homology"/>